<evidence type="ECO:0000255" key="1">
    <source>
        <dbReference type="HAMAP-Rule" id="MF_00558"/>
    </source>
</evidence>
<sequence length="388" mass="41153">MNLHEYQGKQLFAEYGLPVSKGFAVDTPEAAAEACDKIGGSEWVVKAQVHAGGRGKAGGVKLVRSKEDAKAFAAQWLGKRLVTYQTDANGQPVTKILVESCTDIAKELYLGAVVDRSSRRIVFMASTEGGVDIEKVAHETPEKIIKATIDPLVGAQPFQGRELAFQLGLEGKQVAQFAKIFVGLAKLFKEHDLALLEVNPLVIKADGDLHCLDAKINIDANAMYRQPKLKTFHDPSQDDPREAHAASFELNYVALEGNIGCMVNGAGLAMGTMDIVNLHGGKPANFLDVGGGATKERVTEAFKIILSDSNVAAVLVNIFGGIVRCDMIAEGIIGAVKEVGVKVPVVVRLEGNNAELGAKVLAESGLNIIAATSLTDAAQQVVKAAEGK</sequence>
<accession>B0KNW8</accession>
<proteinExistence type="inferred from homology"/>
<keyword id="KW-0067">ATP-binding</keyword>
<keyword id="KW-0436">Ligase</keyword>
<keyword id="KW-0460">Magnesium</keyword>
<keyword id="KW-0479">Metal-binding</keyword>
<keyword id="KW-0547">Nucleotide-binding</keyword>
<keyword id="KW-0816">Tricarboxylic acid cycle</keyword>
<name>SUCC_PSEPG</name>
<gene>
    <name evidence="1" type="primary">sucC</name>
    <name type="ordered locus">PputGB1_3757</name>
</gene>
<organism>
    <name type="scientific">Pseudomonas putida (strain GB-1)</name>
    <dbReference type="NCBI Taxonomy" id="76869"/>
    <lineage>
        <taxon>Bacteria</taxon>
        <taxon>Pseudomonadati</taxon>
        <taxon>Pseudomonadota</taxon>
        <taxon>Gammaproteobacteria</taxon>
        <taxon>Pseudomonadales</taxon>
        <taxon>Pseudomonadaceae</taxon>
        <taxon>Pseudomonas</taxon>
    </lineage>
</organism>
<feature type="chain" id="PRO_1000082173" description="Succinate--CoA ligase [ADP-forming] subunit beta">
    <location>
        <begin position="1"/>
        <end position="388"/>
    </location>
</feature>
<feature type="domain" description="ATP-grasp" evidence="1">
    <location>
        <begin position="9"/>
        <end position="244"/>
    </location>
</feature>
<feature type="binding site" evidence="1">
    <location>
        <position position="46"/>
    </location>
    <ligand>
        <name>ATP</name>
        <dbReference type="ChEBI" id="CHEBI:30616"/>
    </ligand>
</feature>
<feature type="binding site" evidence="1">
    <location>
        <begin position="53"/>
        <end position="55"/>
    </location>
    <ligand>
        <name>ATP</name>
        <dbReference type="ChEBI" id="CHEBI:30616"/>
    </ligand>
</feature>
<feature type="binding site" evidence="1">
    <location>
        <position position="99"/>
    </location>
    <ligand>
        <name>ATP</name>
        <dbReference type="ChEBI" id="CHEBI:30616"/>
    </ligand>
</feature>
<feature type="binding site" evidence="1">
    <location>
        <position position="102"/>
    </location>
    <ligand>
        <name>ATP</name>
        <dbReference type="ChEBI" id="CHEBI:30616"/>
    </ligand>
</feature>
<feature type="binding site" evidence="1">
    <location>
        <position position="107"/>
    </location>
    <ligand>
        <name>ATP</name>
        <dbReference type="ChEBI" id="CHEBI:30616"/>
    </ligand>
</feature>
<feature type="binding site" evidence="1">
    <location>
        <position position="199"/>
    </location>
    <ligand>
        <name>Mg(2+)</name>
        <dbReference type="ChEBI" id="CHEBI:18420"/>
    </ligand>
</feature>
<feature type="binding site" evidence="1">
    <location>
        <position position="213"/>
    </location>
    <ligand>
        <name>Mg(2+)</name>
        <dbReference type="ChEBI" id="CHEBI:18420"/>
    </ligand>
</feature>
<feature type="binding site" evidence="1">
    <location>
        <position position="264"/>
    </location>
    <ligand>
        <name>substrate</name>
        <note>ligand shared with subunit alpha</note>
    </ligand>
</feature>
<feature type="binding site" evidence="1">
    <location>
        <begin position="321"/>
        <end position="323"/>
    </location>
    <ligand>
        <name>substrate</name>
        <note>ligand shared with subunit alpha</note>
    </ligand>
</feature>
<reference key="1">
    <citation type="submission" date="2008-01" db="EMBL/GenBank/DDBJ databases">
        <title>Complete sequence of Pseudomonas putida GB-1.</title>
        <authorList>
            <consortium name="US DOE Joint Genome Institute"/>
            <person name="Copeland A."/>
            <person name="Lucas S."/>
            <person name="Lapidus A."/>
            <person name="Barry K."/>
            <person name="Glavina del Rio T."/>
            <person name="Dalin E."/>
            <person name="Tice H."/>
            <person name="Pitluck S."/>
            <person name="Bruce D."/>
            <person name="Goodwin L."/>
            <person name="Chertkov O."/>
            <person name="Brettin T."/>
            <person name="Detter J.C."/>
            <person name="Han C."/>
            <person name="Kuske C.R."/>
            <person name="Schmutz J."/>
            <person name="Larimer F."/>
            <person name="Land M."/>
            <person name="Hauser L."/>
            <person name="Kyrpides N."/>
            <person name="Kim E."/>
            <person name="McCarthy J.K."/>
            <person name="Richardson P."/>
        </authorList>
    </citation>
    <scope>NUCLEOTIDE SEQUENCE [LARGE SCALE GENOMIC DNA]</scope>
    <source>
        <strain>GB-1</strain>
    </source>
</reference>
<protein>
    <recommendedName>
        <fullName evidence="1">Succinate--CoA ligase [ADP-forming] subunit beta</fullName>
        <ecNumber evidence="1">6.2.1.5</ecNumber>
    </recommendedName>
    <alternativeName>
        <fullName evidence="1">Succinyl-CoA synthetase subunit beta</fullName>
        <shortName evidence="1">SCS-beta</shortName>
    </alternativeName>
</protein>
<dbReference type="EC" id="6.2.1.5" evidence="1"/>
<dbReference type="EMBL" id="CP000926">
    <property type="protein sequence ID" value="ABY99647.1"/>
    <property type="molecule type" value="Genomic_DNA"/>
</dbReference>
<dbReference type="RefSeq" id="WP_008091914.1">
    <property type="nucleotide sequence ID" value="NC_010322.1"/>
</dbReference>
<dbReference type="SMR" id="B0KNW8"/>
<dbReference type="GeneID" id="90537907"/>
<dbReference type="KEGG" id="ppg:PputGB1_3757"/>
<dbReference type="eggNOG" id="COG0045">
    <property type="taxonomic scope" value="Bacteria"/>
</dbReference>
<dbReference type="HOGENOM" id="CLU_037430_0_2_6"/>
<dbReference type="UniPathway" id="UPA00223">
    <property type="reaction ID" value="UER00999"/>
</dbReference>
<dbReference type="Proteomes" id="UP000002157">
    <property type="component" value="Chromosome"/>
</dbReference>
<dbReference type="GO" id="GO:0005829">
    <property type="term" value="C:cytosol"/>
    <property type="evidence" value="ECO:0007669"/>
    <property type="project" value="TreeGrafter"/>
</dbReference>
<dbReference type="GO" id="GO:0042709">
    <property type="term" value="C:succinate-CoA ligase complex"/>
    <property type="evidence" value="ECO:0007669"/>
    <property type="project" value="TreeGrafter"/>
</dbReference>
<dbReference type="GO" id="GO:0005524">
    <property type="term" value="F:ATP binding"/>
    <property type="evidence" value="ECO:0007669"/>
    <property type="project" value="UniProtKB-UniRule"/>
</dbReference>
<dbReference type="GO" id="GO:0000287">
    <property type="term" value="F:magnesium ion binding"/>
    <property type="evidence" value="ECO:0007669"/>
    <property type="project" value="UniProtKB-UniRule"/>
</dbReference>
<dbReference type="GO" id="GO:0004775">
    <property type="term" value="F:succinate-CoA ligase (ADP-forming) activity"/>
    <property type="evidence" value="ECO:0007669"/>
    <property type="project" value="UniProtKB-UniRule"/>
</dbReference>
<dbReference type="GO" id="GO:0004776">
    <property type="term" value="F:succinate-CoA ligase (GDP-forming) activity"/>
    <property type="evidence" value="ECO:0007669"/>
    <property type="project" value="RHEA"/>
</dbReference>
<dbReference type="GO" id="GO:0006104">
    <property type="term" value="P:succinyl-CoA metabolic process"/>
    <property type="evidence" value="ECO:0007669"/>
    <property type="project" value="TreeGrafter"/>
</dbReference>
<dbReference type="GO" id="GO:0006099">
    <property type="term" value="P:tricarboxylic acid cycle"/>
    <property type="evidence" value="ECO:0007669"/>
    <property type="project" value="UniProtKB-UniRule"/>
</dbReference>
<dbReference type="FunFam" id="3.30.1490.20:FF:000002">
    <property type="entry name" value="Succinate--CoA ligase [ADP-forming] subunit beta"/>
    <property type="match status" value="1"/>
</dbReference>
<dbReference type="FunFam" id="3.30.470.20:FF:000002">
    <property type="entry name" value="Succinate--CoA ligase [ADP-forming] subunit beta"/>
    <property type="match status" value="1"/>
</dbReference>
<dbReference type="FunFam" id="3.40.50.261:FF:000001">
    <property type="entry name" value="Succinate--CoA ligase [ADP-forming] subunit beta"/>
    <property type="match status" value="1"/>
</dbReference>
<dbReference type="Gene3D" id="3.30.1490.20">
    <property type="entry name" value="ATP-grasp fold, A domain"/>
    <property type="match status" value="1"/>
</dbReference>
<dbReference type="Gene3D" id="3.30.470.20">
    <property type="entry name" value="ATP-grasp fold, B domain"/>
    <property type="match status" value="1"/>
</dbReference>
<dbReference type="Gene3D" id="3.40.50.261">
    <property type="entry name" value="Succinyl-CoA synthetase domains"/>
    <property type="match status" value="1"/>
</dbReference>
<dbReference type="HAMAP" id="MF_00558">
    <property type="entry name" value="Succ_CoA_beta"/>
    <property type="match status" value="1"/>
</dbReference>
<dbReference type="InterPro" id="IPR011761">
    <property type="entry name" value="ATP-grasp"/>
</dbReference>
<dbReference type="InterPro" id="IPR013650">
    <property type="entry name" value="ATP-grasp_succ-CoA_synth-type"/>
</dbReference>
<dbReference type="InterPro" id="IPR013815">
    <property type="entry name" value="ATP_grasp_subdomain_1"/>
</dbReference>
<dbReference type="InterPro" id="IPR017866">
    <property type="entry name" value="Succ-CoA_synthase_bsu_CS"/>
</dbReference>
<dbReference type="InterPro" id="IPR005811">
    <property type="entry name" value="SUCC_ACL_C"/>
</dbReference>
<dbReference type="InterPro" id="IPR005809">
    <property type="entry name" value="Succ_CoA_ligase-like_bsu"/>
</dbReference>
<dbReference type="InterPro" id="IPR016102">
    <property type="entry name" value="Succinyl-CoA_synth-like"/>
</dbReference>
<dbReference type="NCBIfam" id="NF001913">
    <property type="entry name" value="PRK00696.1"/>
    <property type="match status" value="1"/>
</dbReference>
<dbReference type="NCBIfam" id="TIGR01016">
    <property type="entry name" value="sucCoAbeta"/>
    <property type="match status" value="1"/>
</dbReference>
<dbReference type="PANTHER" id="PTHR11815:SF10">
    <property type="entry name" value="SUCCINATE--COA LIGASE [GDP-FORMING] SUBUNIT BETA, MITOCHONDRIAL"/>
    <property type="match status" value="1"/>
</dbReference>
<dbReference type="PANTHER" id="PTHR11815">
    <property type="entry name" value="SUCCINYL-COA SYNTHETASE BETA CHAIN"/>
    <property type="match status" value="1"/>
</dbReference>
<dbReference type="Pfam" id="PF08442">
    <property type="entry name" value="ATP-grasp_2"/>
    <property type="match status" value="1"/>
</dbReference>
<dbReference type="Pfam" id="PF00549">
    <property type="entry name" value="Ligase_CoA"/>
    <property type="match status" value="1"/>
</dbReference>
<dbReference type="PIRSF" id="PIRSF001554">
    <property type="entry name" value="SucCS_beta"/>
    <property type="match status" value="1"/>
</dbReference>
<dbReference type="SUPFAM" id="SSF56059">
    <property type="entry name" value="Glutathione synthetase ATP-binding domain-like"/>
    <property type="match status" value="1"/>
</dbReference>
<dbReference type="SUPFAM" id="SSF52210">
    <property type="entry name" value="Succinyl-CoA synthetase domains"/>
    <property type="match status" value="1"/>
</dbReference>
<dbReference type="PROSITE" id="PS50975">
    <property type="entry name" value="ATP_GRASP"/>
    <property type="match status" value="1"/>
</dbReference>
<dbReference type="PROSITE" id="PS01217">
    <property type="entry name" value="SUCCINYL_COA_LIG_3"/>
    <property type="match status" value="1"/>
</dbReference>
<comment type="function">
    <text evidence="1">Succinyl-CoA synthetase functions in the citric acid cycle (TCA), coupling the hydrolysis of succinyl-CoA to the synthesis of either ATP or GTP and thus represents the only step of substrate-level phosphorylation in the TCA. The beta subunit provides nucleotide specificity of the enzyme and binds the substrate succinate, while the binding sites for coenzyme A and phosphate are found in the alpha subunit.</text>
</comment>
<comment type="catalytic activity">
    <reaction evidence="1">
        <text>succinate + ATP + CoA = succinyl-CoA + ADP + phosphate</text>
        <dbReference type="Rhea" id="RHEA:17661"/>
        <dbReference type="ChEBI" id="CHEBI:30031"/>
        <dbReference type="ChEBI" id="CHEBI:30616"/>
        <dbReference type="ChEBI" id="CHEBI:43474"/>
        <dbReference type="ChEBI" id="CHEBI:57287"/>
        <dbReference type="ChEBI" id="CHEBI:57292"/>
        <dbReference type="ChEBI" id="CHEBI:456216"/>
        <dbReference type="EC" id="6.2.1.5"/>
    </reaction>
    <physiologicalReaction direction="right-to-left" evidence="1">
        <dbReference type="Rhea" id="RHEA:17663"/>
    </physiologicalReaction>
</comment>
<comment type="catalytic activity">
    <reaction evidence="1">
        <text>GTP + succinate + CoA = succinyl-CoA + GDP + phosphate</text>
        <dbReference type="Rhea" id="RHEA:22120"/>
        <dbReference type="ChEBI" id="CHEBI:30031"/>
        <dbReference type="ChEBI" id="CHEBI:37565"/>
        <dbReference type="ChEBI" id="CHEBI:43474"/>
        <dbReference type="ChEBI" id="CHEBI:57287"/>
        <dbReference type="ChEBI" id="CHEBI:57292"/>
        <dbReference type="ChEBI" id="CHEBI:58189"/>
    </reaction>
    <physiologicalReaction direction="right-to-left" evidence="1">
        <dbReference type="Rhea" id="RHEA:22122"/>
    </physiologicalReaction>
</comment>
<comment type="cofactor">
    <cofactor evidence="1">
        <name>Mg(2+)</name>
        <dbReference type="ChEBI" id="CHEBI:18420"/>
    </cofactor>
    <text evidence="1">Binds 1 Mg(2+) ion per subunit.</text>
</comment>
<comment type="pathway">
    <text evidence="1">Carbohydrate metabolism; tricarboxylic acid cycle; succinate from succinyl-CoA (ligase route): step 1/1.</text>
</comment>
<comment type="subunit">
    <text evidence="1">Heterotetramer of two alpha and two beta subunits.</text>
</comment>
<comment type="similarity">
    <text evidence="1">Belongs to the succinate/malate CoA ligase beta subunit family.</text>
</comment>